<feature type="chain" id="PRO_0000106004" description="Nucleoprotein">
    <location>
        <begin position="1"/>
        <end position="455"/>
    </location>
</feature>
<feature type="domain" description="CoV N NTD" evidence="3">
    <location>
        <begin position="64"/>
        <end position="193"/>
    </location>
</feature>
<feature type="domain" description="CoV N CTD" evidence="4">
    <location>
        <begin position="260"/>
        <end position="383"/>
    </location>
</feature>
<feature type="region of interest" description="Disordered" evidence="5">
    <location>
        <begin position="1"/>
        <end position="62"/>
    </location>
</feature>
<feature type="region of interest" description="RNA-binding" evidence="2">
    <location>
        <begin position="56"/>
        <end position="197"/>
    </location>
</feature>
<feature type="region of interest" description="Disordered" evidence="5">
    <location>
        <begin position="159"/>
        <end position="230"/>
    </location>
</feature>
<feature type="region of interest" description="Dimerization" evidence="2">
    <location>
        <begin position="267"/>
        <end position="384"/>
    </location>
</feature>
<feature type="region of interest" description="Disordered" evidence="5">
    <location>
        <begin position="271"/>
        <end position="292"/>
    </location>
</feature>
<feature type="region of interest" description="Disordered" evidence="5">
    <location>
        <begin position="384"/>
        <end position="428"/>
    </location>
</feature>
<feature type="compositionally biased region" description="Polar residues" evidence="5">
    <location>
        <begin position="9"/>
        <end position="19"/>
    </location>
</feature>
<feature type="compositionally biased region" description="Polar residues" evidence="5">
    <location>
        <begin position="50"/>
        <end position="61"/>
    </location>
</feature>
<feature type="compositionally biased region" description="Low complexity" evidence="5">
    <location>
        <begin position="193"/>
        <end position="212"/>
    </location>
</feature>
<feature type="compositionally biased region" description="Polar residues" evidence="5">
    <location>
        <begin position="215"/>
        <end position="227"/>
    </location>
</feature>
<feature type="compositionally biased region" description="Basic residues" evidence="5">
    <location>
        <begin position="393"/>
        <end position="403"/>
    </location>
</feature>
<feature type="binding site" evidence="1">
    <location>
        <position position="109"/>
    </location>
    <ligand>
        <name>RNA</name>
        <dbReference type="ChEBI" id="CHEBI:33697"/>
    </ligand>
</feature>
<feature type="binding site" evidence="1">
    <location>
        <position position="125"/>
    </location>
    <ligand>
        <name>RNA</name>
        <dbReference type="ChEBI" id="CHEBI:33697"/>
    </ligand>
</feature>
<feature type="binding site" evidence="1">
    <location>
        <position position="167"/>
    </location>
    <ligand>
        <name>RNA</name>
        <dbReference type="ChEBI" id="CHEBI:33697"/>
    </ligand>
</feature>
<feature type="modified residue" description="Phosphoserine; by host" evidence="2">
    <location>
        <position position="170"/>
    </location>
</feature>
<feature type="modified residue" description="Phosphothreonine; by host" evidence="2">
    <location>
        <position position="177"/>
    </location>
</feature>
<feature type="modified residue" description="Phosphoserine; by host" evidence="2">
    <location>
        <position position="194"/>
    </location>
</feature>
<feature type="modified residue" description="Phosphoserine; by host" evidence="2">
    <location>
        <position position="390"/>
    </location>
</feature>
<feature type="modified residue" description="Phosphoserine; by host" evidence="2">
    <location>
        <position position="425"/>
    </location>
</feature>
<feature type="modified residue" description="Phosphothreonine; by host" evidence="2">
    <location>
        <position position="429"/>
    </location>
</feature>
<dbReference type="EMBL" id="M35253">
    <property type="protein sequence ID" value="AAA46439.1"/>
    <property type="molecule type" value="Genomic_RNA"/>
</dbReference>
<dbReference type="PIR" id="D45340">
    <property type="entry name" value="D45340"/>
</dbReference>
<dbReference type="SMR" id="P18446"/>
<dbReference type="GO" id="GO:0044172">
    <property type="term" value="C:host cell endoplasmic reticulum-Golgi intermediate compartment"/>
    <property type="evidence" value="ECO:0007669"/>
    <property type="project" value="UniProtKB-SubCell"/>
</dbReference>
<dbReference type="GO" id="GO:0044177">
    <property type="term" value="C:host cell Golgi apparatus"/>
    <property type="evidence" value="ECO:0007669"/>
    <property type="project" value="UniProtKB-SubCell"/>
</dbReference>
<dbReference type="GO" id="GO:1990904">
    <property type="term" value="C:ribonucleoprotein complex"/>
    <property type="evidence" value="ECO:0007669"/>
    <property type="project" value="UniProtKB-KW"/>
</dbReference>
<dbReference type="GO" id="GO:0019013">
    <property type="term" value="C:viral nucleocapsid"/>
    <property type="evidence" value="ECO:0007669"/>
    <property type="project" value="UniProtKB-UniRule"/>
</dbReference>
<dbReference type="GO" id="GO:0003723">
    <property type="term" value="F:RNA binding"/>
    <property type="evidence" value="ECO:0007669"/>
    <property type="project" value="UniProtKB-UniRule"/>
</dbReference>
<dbReference type="CDD" id="cd21595">
    <property type="entry name" value="CoV_N-CTD"/>
    <property type="match status" value="1"/>
</dbReference>
<dbReference type="CDD" id="cd21554">
    <property type="entry name" value="CoV_N-NTD"/>
    <property type="match status" value="1"/>
</dbReference>
<dbReference type="HAMAP" id="MF_04096">
    <property type="entry name" value="BETA_CORONA_NCAP"/>
    <property type="match status" value="1"/>
</dbReference>
<dbReference type="InterPro" id="IPR044344">
    <property type="entry name" value="N_prot_C_CoV"/>
</dbReference>
<dbReference type="InterPro" id="IPR044345">
    <property type="entry name" value="N_prot_N_CoV"/>
</dbReference>
<dbReference type="InterPro" id="IPR043505">
    <property type="entry name" value="NCAP_bCoV"/>
</dbReference>
<dbReference type="InterPro" id="IPR001218">
    <property type="entry name" value="Nucleocap_CoV"/>
</dbReference>
<dbReference type="InterPro" id="IPR037179">
    <property type="entry name" value="Nucleocapsid_C"/>
</dbReference>
<dbReference type="InterPro" id="IPR037195">
    <property type="entry name" value="Nucleocapsid_N"/>
</dbReference>
<dbReference type="Pfam" id="PF00937">
    <property type="entry name" value="CoV_nucleocap"/>
    <property type="match status" value="1"/>
</dbReference>
<dbReference type="PIRSF" id="PIRSF003888">
    <property type="entry name" value="Corona_nucleocap"/>
    <property type="match status" value="1"/>
</dbReference>
<dbReference type="SUPFAM" id="SSF110304">
    <property type="entry name" value="Coronavirus RNA-binding domain"/>
    <property type="match status" value="1"/>
</dbReference>
<dbReference type="SUPFAM" id="SSF103068">
    <property type="entry name" value="Nucleocapsid protein dimerization domain"/>
    <property type="match status" value="1"/>
</dbReference>
<dbReference type="PROSITE" id="PS51929">
    <property type="entry name" value="COV_N_CTD"/>
    <property type="match status" value="1"/>
</dbReference>
<dbReference type="PROSITE" id="PS51928">
    <property type="entry name" value="COV_N_NTD"/>
    <property type="match status" value="1"/>
</dbReference>
<comment type="function">
    <text evidence="2">Packages the positive strand viral genome RNA into a helical ribonucleocapsid (RNP) and plays a fundamental role during virion assembly through its interactions with the viral genome and membrane protein M. Plays an important role in enhancing the efficiency of subgenomic viral RNA transcription as well as viral replication.</text>
</comment>
<comment type="subunit">
    <text evidence="2">Homooligomer. Both monomeric and oligomeric forms interact with RNA. Interacts with protein M. Interacts with NSP3; this interaction serves to tether the genome to the newly translated replicase-transcriptase complex at a very early stage of infection.</text>
</comment>
<comment type="subcellular location">
    <subcellularLocation>
        <location evidence="2">Virion</location>
    </subcellularLocation>
    <subcellularLocation>
        <location evidence="2">Host endoplasmic reticulum-Golgi intermediate compartment</location>
    </subcellularLocation>
    <subcellularLocation>
        <location evidence="2">Host Golgi apparatus</location>
    </subcellularLocation>
    <text evidence="2">Located inside the virion, complexed with the viral RNA. Probably associates with ER-derived membranes where it participates in viral RNA synthesis and virus budding.</text>
</comment>
<comment type="PTM">
    <text evidence="2">ADP-ribosylated. The ADP-ribosylation is retained in the virion during infection.</text>
</comment>
<comment type="PTM">
    <text evidence="2">Phosphorylated on serine and threonine residues.</text>
</comment>
<comment type="similarity">
    <text evidence="2">Belongs to the betacoronavirus nucleocapsid protein family.</text>
</comment>
<proteinExistence type="inferred from homology"/>
<organism>
    <name type="scientific">Murine coronavirus (strain 1)</name>
    <name type="common">MHV-1</name>
    <name type="synonym">Murine hepatitis virus</name>
    <dbReference type="NCBI Taxonomy" id="11139"/>
    <lineage>
        <taxon>Viruses</taxon>
        <taxon>Riboviria</taxon>
        <taxon>Orthornavirae</taxon>
        <taxon>Pisuviricota</taxon>
        <taxon>Pisoniviricetes</taxon>
        <taxon>Nidovirales</taxon>
        <taxon>Cornidovirineae</taxon>
        <taxon>Coronaviridae</taxon>
        <taxon>Orthocoronavirinae</taxon>
        <taxon>Betacoronavirus</taxon>
        <taxon>Embecovirus</taxon>
        <taxon>Murine coronavirus</taxon>
    </lineage>
</organism>
<protein>
    <recommendedName>
        <fullName evidence="2">Nucleoprotein</fullName>
    </recommendedName>
    <alternativeName>
        <fullName evidence="2">Nucleocapsid protein</fullName>
        <shortName evidence="2">NC</shortName>
        <shortName evidence="2">Protein N</shortName>
    </alternativeName>
</protein>
<evidence type="ECO:0000250" key="1">
    <source>
        <dbReference type="UniProtKB" id="P0DTC9"/>
    </source>
</evidence>
<evidence type="ECO:0000255" key="2">
    <source>
        <dbReference type="HAMAP-Rule" id="MF_04096"/>
    </source>
</evidence>
<evidence type="ECO:0000255" key="3">
    <source>
        <dbReference type="PROSITE-ProRule" id="PRU01276"/>
    </source>
</evidence>
<evidence type="ECO:0000255" key="4">
    <source>
        <dbReference type="PROSITE-ProRule" id="PRU01277"/>
    </source>
</evidence>
<evidence type="ECO:0000256" key="5">
    <source>
        <dbReference type="SAM" id="MobiDB-lite"/>
    </source>
</evidence>
<gene>
    <name evidence="2" type="primary">N</name>
    <name type="ORF">7a</name>
</gene>
<name>NCAP_CVM1</name>
<sequence length="455" mass="49694">MSFVPGQENAGSRSSSVNRAGNGILKKTTWADQTERGPNNQNRGRRNQPKQTATTQPNSGSVVPHYSWFSGITQFQKGKEFQFAQGQGVPIANGIPASEQKGYWYRHNRRSFKTPDGQQKQLLPRWYFYYLGTGPHAGAEYGDDIDGVVWVASQQADTKTTADIVERDPSSHEAIPTRFAPGTVLPQGFYVEGSGRSAPASRSGSRSQSRGPNNRARSSSNQRQPASTVKPDMAEEIAALVLAKLGKDAGQPKQVTKQSAKEVRQKILNKPRQKRTPNKQCPVQQCFGKRGPNQNFGGSEMLKLGTSDPQFPILAELAPTPSAFFFGSKLELVKKNSGGADDPTKDVYELQYSGAIRFDSTLPGFETIMKVLNENLDAYQDQAGGADVVSPKPQRKRGTKQKALKGEVDNVSVAKPKSSVQRNVSRELTPEDRSLLAQILDDGVVPDGLEDDSNV</sequence>
<keyword id="KW-0013">ADP-ribosylation</keyword>
<keyword id="KW-1040">Host Golgi apparatus</keyword>
<keyword id="KW-0597">Phosphoprotein</keyword>
<keyword id="KW-0687">Ribonucleoprotein</keyword>
<keyword id="KW-0694">RNA-binding</keyword>
<keyword id="KW-0804">Transcription</keyword>
<keyword id="KW-0805">Transcription regulation</keyword>
<keyword id="KW-0543">Viral nucleoprotein</keyword>
<keyword id="KW-0946">Virion</keyword>
<accession>P18446</accession>
<organismHost>
    <name type="scientific">Mus musculus</name>
    <name type="common">Mouse</name>
    <dbReference type="NCBI Taxonomy" id="10090"/>
</organismHost>
<reference key="1">
    <citation type="journal article" date="1990" name="Virology">
        <title>Sequence comparison of the N genes of five strains of the coronavirus mouse hepatitis virus suggests a three domain structure for the nucleocapsid protein.</title>
        <authorList>
            <person name="Parker M.M."/>
            <person name="Masters P.S."/>
        </authorList>
    </citation>
    <scope>NUCLEOTIDE SEQUENCE [GENOMIC RNA]</scope>
</reference>